<evidence type="ECO:0000255" key="1">
    <source>
        <dbReference type="HAMAP-Rule" id="MF_01297"/>
    </source>
</evidence>
<gene>
    <name type="ordered locus">MMAR_4871</name>
</gene>
<dbReference type="EC" id="5.99.-.-" evidence="1"/>
<dbReference type="EMBL" id="CP000854">
    <property type="protein sequence ID" value="ACC43275.1"/>
    <property type="molecule type" value="Genomic_DNA"/>
</dbReference>
<dbReference type="RefSeq" id="WP_012396402.1">
    <property type="nucleotide sequence ID" value="NC_010612.1"/>
</dbReference>
<dbReference type="SMR" id="B2HH20"/>
<dbReference type="STRING" id="216594.MMAR_4871"/>
<dbReference type="GeneID" id="34340310"/>
<dbReference type="KEGG" id="mmi:MMAR_4871"/>
<dbReference type="eggNOG" id="COG4044">
    <property type="taxonomic scope" value="Bacteria"/>
</dbReference>
<dbReference type="HOGENOM" id="CLU_085483_0_0_11"/>
<dbReference type="OrthoDB" id="4804006at2"/>
<dbReference type="Proteomes" id="UP000001190">
    <property type="component" value="Chromosome"/>
</dbReference>
<dbReference type="GO" id="GO:0020037">
    <property type="term" value="F:heme binding"/>
    <property type="evidence" value="ECO:0007669"/>
    <property type="project" value="UniProtKB-UniRule"/>
</dbReference>
<dbReference type="GO" id="GO:0046872">
    <property type="term" value="F:metal ion binding"/>
    <property type="evidence" value="ECO:0007669"/>
    <property type="project" value="UniProtKB-KW"/>
</dbReference>
<dbReference type="GO" id="GO:0062213">
    <property type="term" value="F:peroxynitrite isomerase activity"/>
    <property type="evidence" value="ECO:0007669"/>
    <property type="project" value="UniProtKB-UniRule"/>
</dbReference>
<dbReference type="CDD" id="cd07828">
    <property type="entry name" value="lipocalin_heme-bd-THAP4-like"/>
    <property type="match status" value="1"/>
</dbReference>
<dbReference type="Gene3D" id="2.40.128.20">
    <property type="match status" value="1"/>
</dbReference>
<dbReference type="HAMAP" id="MF_01297">
    <property type="entry name" value="nitrobindin"/>
    <property type="match status" value="1"/>
</dbReference>
<dbReference type="InterPro" id="IPR012674">
    <property type="entry name" value="Calycin"/>
</dbReference>
<dbReference type="InterPro" id="IPR022939">
    <property type="entry name" value="Nb(III)_bact/plant"/>
</dbReference>
<dbReference type="InterPro" id="IPR045165">
    <property type="entry name" value="Nitrobindin"/>
</dbReference>
<dbReference type="InterPro" id="IPR014878">
    <property type="entry name" value="THAP4-like_heme-bd"/>
</dbReference>
<dbReference type="PANTHER" id="PTHR15854:SF4">
    <property type="entry name" value="PEROXYNITRITE ISOMERASE THAP4"/>
    <property type="match status" value="1"/>
</dbReference>
<dbReference type="PANTHER" id="PTHR15854">
    <property type="entry name" value="THAP4 PROTEIN"/>
    <property type="match status" value="1"/>
</dbReference>
<dbReference type="Pfam" id="PF08768">
    <property type="entry name" value="THAP4_heme-bd"/>
    <property type="match status" value="1"/>
</dbReference>
<dbReference type="SUPFAM" id="SSF50814">
    <property type="entry name" value="Lipocalins"/>
    <property type="match status" value="1"/>
</dbReference>
<organism>
    <name type="scientific">Mycobacterium marinum (strain ATCC BAA-535 / M)</name>
    <dbReference type="NCBI Taxonomy" id="216594"/>
    <lineage>
        <taxon>Bacteria</taxon>
        <taxon>Bacillati</taxon>
        <taxon>Actinomycetota</taxon>
        <taxon>Actinomycetes</taxon>
        <taxon>Mycobacteriales</taxon>
        <taxon>Mycobacteriaceae</taxon>
        <taxon>Mycobacterium</taxon>
        <taxon>Mycobacterium ulcerans group</taxon>
    </lineage>
</organism>
<name>NB1_MYCMM</name>
<proteinExistence type="inferred from homology"/>
<keyword id="KW-0349">Heme</keyword>
<keyword id="KW-0408">Iron</keyword>
<keyword id="KW-0413">Isomerase</keyword>
<keyword id="KW-0479">Metal-binding</keyword>
<keyword id="KW-1185">Reference proteome</keyword>
<sequence length="223" mass="24042">MTSDASQDGPDAVAGSGDRAVAAAAERAKLTAARNIPTFDDLPLPADTANLRHGANLHDALLALLPLVGVWRGEGEGRGPHGDYRFGQQIVVSHDGGDYLNWEARSWRLDEDGQYEEPGLRETGFWRFVSDPEDDPSESQAIELLLAHSAGYVELFYGRPLTQSSWELVTDALARSRSGVLVGGAKRLYGIIEGGDLAYVEERVDADGGLVPHLSARLSRYAG</sequence>
<accession>B2HH20</accession>
<reference key="1">
    <citation type="journal article" date="2008" name="Genome Res.">
        <title>Insights from the complete genome sequence of Mycobacterium marinum on the evolution of Mycobacterium tuberculosis.</title>
        <authorList>
            <person name="Stinear T.P."/>
            <person name="Seemann T."/>
            <person name="Harrison P.F."/>
            <person name="Jenkin G.A."/>
            <person name="Davies J.K."/>
            <person name="Johnson P.D."/>
            <person name="Abdellah Z."/>
            <person name="Arrowsmith C."/>
            <person name="Chillingworth T."/>
            <person name="Churcher C."/>
            <person name="Clarke K."/>
            <person name="Cronin A."/>
            <person name="Davis P."/>
            <person name="Goodhead I."/>
            <person name="Holroyd N."/>
            <person name="Jagels K."/>
            <person name="Lord A."/>
            <person name="Moule S."/>
            <person name="Mungall K."/>
            <person name="Norbertczak H."/>
            <person name="Quail M.A."/>
            <person name="Rabbinowitsch E."/>
            <person name="Walker D."/>
            <person name="White B."/>
            <person name="Whitehead S."/>
            <person name="Small P.L."/>
            <person name="Brosch R."/>
            <person name="Ramakrishnan L."/>
            <person name="Fischbach M.A."/>
            <person name="Parkhill J."/>
            <person name="Cole S.T."/>
        </authorList>
    </citation>
    <scope>NUCLEOTIDE SEQUENCE [LARGE SCALE GENOMIC DNA]</scope>
    <source>
        <strain>ATCC BAA-535 / M</strain>
    </source>
</reference>
<feature type="chain" id="PRO_0000356922" description="Peroxynitrite isomerase 1">
    <location>
        <begin position="1"/>
        <end position="223"/>
    </location>
</feature>
<feature type="short sequence motif" description="GXWXGXG" evidence="1">
    <location>
        <begin position="69"/>
        <end position="75"/>
    </location>
</feature>
<feature type="binding site" evidence="1">
    <location>
        <position position="186"/>
    </location>
    <ligand>
        <name>heme b</name>
        <dbReference type="ChEBI" id="CHEBI:60344"/>
    </ligand>
</feature>
<feature type="binding site" description="axial binding residue" evidence="1">
    <location>
        <position position="213"/>
    </location>
    <ligand>
        <name>heme b</name>
        <dbReference type="ChEBI" id="CHEBI:60344"/>
    </ligand>
    <ligandPart>
        <name>Fe</name>
        <dbReference type="ChEBI" id="CHEBI:18248"/>
    </ligandPart>
</feature>
<comment type="function">
    <text evidence="1">Heme-binding protein able to scavenge peroxynitrite and to protect free L-tyrosine against peroxynitrite-mediated nitration, by acting as a peroxynitrite isomerase that converts peroxynitrite to nitrate. Therefore, this protein likely plays a role in peroxynitrite sensing and in the detoxification of reactive nitrogen and oxygen species (RNS and ROS, respectively). Is able to bind nitric oxide (NO) in vitro, but may act as a sensor of peroxynitrite levels in vivo.</text>
</comment>
<comment type="catalytic activity">
    <reaction evidence="1">
        <text>peroxynitrite = nitrate</text>
        <dbReference type="Rhea" id="RHEA:63116"/>
        <dbReference type="ChEBI" id="CHEBI:17632"/>
        <dbReference type="ChEBI" id="CHEBI:25941"/>
    </reaction>
    <physiologicalReaction direction="left-to-right" evidence="1">
        <dbReference type="Rhea" id="RHEA:63117"/>
    </physiologicalReaction>
</comment>
<comment type="cofactor">
    <cofactor evidence="1">
        <name>heme b</name>
        <dbReference type="ChEBI" id="CHEBI:60344"/>
    </cofactor>
    <text evidence="1">Binds 1 heme b group per subunit, that coordinates a highly solvent-exposed Fe(III) atom.</text>
</comment>
<comment type="pathway">
    <text evidence="1">Nitrogen metabolism.</text>
</comment>
<comment type="subunit">
    <text evidence="1">Homodimer.</text>
</comment>
<comment type="domain">
    <text evidence="1">Forms a 10-stranded antiparallel beta-barrel structure able to accommodate a hydrophobic ligand in its interior. In fact, this fold hosts the heme group, which is located in a wide surface cleft.</text>
</comment>
<comment type="similarity">
    <text evidence="1">Belongs to the nitrobindin family.</text>
</comment>
<protein>
    <recommendedName>
        <fullName>Peroxynitrite isomerase 1</fullName>
        <ecNumber evidence="1">5.99.-.-</ecNumber>
    </recommendedName>
    <alternativeName>
        <fullName>Ferric nitrobindin</fullName>
        <shortName>Nb(III)</shortName>
    </alternativeName>
</protein>